<accession>A4SYB4</accession>
<reference key="1">
    <citation type="journal article" date="2012" name="Stand. Genomic Sci.">
        <title>Complete genome sequence of Polynucleobacter necessarius subsp. asymbioticus type strain (QLW-P1DMWA-1(T)).</title>
        <authorList>
            <person name="Meincke L."/>
            <person name="Copeland A."/>
            <person name="Lapidus A."/>
            <person name="Lucas S."/>
            <person name="Berry K.W."/>
            <person name="Del Rio T.G."/>
            <person name="Hammon N."/>
            <person name="Dalin E."/>
            <person name="Tice H."/>
            <person name="Pitluck S."/>
            <person name="Richardson P."/>
            <person name="Bruce D."/>
            <person name="Goodwin L."/>
            <person name="Han C."/>
            <person name="Tapia R."/>
            <person name="Detter J.C."/>
            <person name="Schmutz J."/>
            <person name="Brettin T."/>
            <person name="Larimer F."/>
            <person name="Land M."/>
            <person name="Hauser L."/>
            <person name="Kyrpides N.C."/>
            <person name="Ivanova N."/>
            <person name="Goker M."/>
            <person name="Woyke T."/>
            <person name="Wu Q.L."/>
            <person name="Pockl M."/>
            <person name="Hahn M.W."/>
            <person name="Klenk H.P."/>
        </authorList>
    </citation>
    <scope>NUCLEOTIDE SEQUENCE [LARGE SCALE GENOMIC DNA]</scope>
    <source>
        <strain>DSM 18221 / CIP 109841 / QLW-P1DMWA-1</strain>
    </source>
</reference>
<gene>
    <name evidence="1" type="primary">rpiA</name>
    <name type="ordered locus">Pnuc_1264</name>
</gene>
<keyword id="KW-0413">Isomerase</keyword>
<keyword id="KW-1185">Reference proteome</keyword>
<protein>
    <recommendedName>
        <fullName evidence="1">Ribose-5-phosphate isomerase A</fullName>
        <ecNumber evidence="1">5.3.1.6</ecNumber>
    </recommendedName>
    <alternativeName>
        <fullName evidence="1">Phosphoriboisomerase A</fullName>
        <shortName evidence="1">PRI</shortName>
    </alternativeName>
</protein>
<comment type="function">
    <text evidence="1">Catalyzes the reversible conversion of ribose-5-phosphate to ribulose 5-phosphate.</text>
</comment>
<comment type="catalytic activity">
    <reaction evidence="1">
        <text>aldehydo-D-ribose 5-phosphate = D-ribulose 5-phosphate</text>
        <dbReference type="Rhea" id="RHEA:14657"/>
        <dbReference type="ChEBI" id="CHEBI:58121"/>
        <dbReference type="ChEBI" id="CHEBI:58273"/>
        <dbReference type="EC" id="5.3.1.6"/>
    </reaction>
</comment>
<comment type="pathway">
    <text evidence="1">Carbohydrate degradation; pentose phosphate pathway; D-ribose 5-phosphate from D-ribulose 5-phosphate (non-oxidative stage): step 1/1.</text>
</comment>
<comment type="subunit">
    <text evidence="1">Homodimer.</text>
</comment>
<comment type="similarity">
    <text evidence="1">Belongs to the ribose 5-phosphate isomerase family.</text>
</comment>
<sequence length="236" mass="24914">MNQDQLKKMVGDAARDEVLKLPAGQILGVGTGSTANCFIDALAPHKDHFAGTVSSSNATTERLLKHGFKVLDPNDVVSLPAYVDGADEIDPQGHMIKGGGGALTREKIIASMAQQFICICDSSKQVPVLGNFALPVEIIPLAKGVVTRELEKLGGKVTLRLAKSTRADLNQTPSEPFVTDNGGWILDIAGLQIADPLKIESQINQIAGVITVGLFAKEKANILLVSNAAGVDRIVL</sequence>
<dbReference type="EC" id="5.3.1.6" evidence="1"/>
<dbReference type="EMBL" id="CP000655">
    <property type="protein sequence ID" value="ABP34478.1"/>
    <property type="molecule type" value="Genomic_DNA"/>
</dbReference>
<dbReference type="RefSeq" id="WP_011903103.1">
    <property type="nucleotide sequence ID" value="NC_009379.1"/>
</dbReference>
<dbReference type="SMR" id="A4SYB4"/>
<dbReference type="GeneID" id="31481651"/>
<dbReference type="KEGG" id="pnu:Pnuc_1264"/>
<dbReference type="eggNOG" id="COG0120">
    <property type="taxonomic scope" value="Bacteria"/>
</dbReference>
<dbReference type="HOGENOM" id="CLU_056590_1_1_4"/>
<dbReference type="UniPathway" id="UPA00115">
    <property type="reaction ID" value="UER00412"/>
</dbReference>
<dbReference type="Proteomes" id="UP000000231">
    <property type="component" value="Chromosome"/>
</dbReference>
<dbReference type="GO" id="GO:0005829">
    <property type="term" value="C:cytosol"/>
    <property type="evidence" value="ECO:0007669"/>
    <property type="project" value="TreeGrafter"/>
</dbReference>
<dbReference type="GO" id="GO:0004751">
    <property type="term" value="F:ribose-5-phosphate isomerase activity"/>
    <property type="evidence" value="ECO:0007669"/>
    <property type="project" value="UniProtKB-UniRule"/>
</dbReference>
<dbReference type="GO" id="GO:0006014">
    <property type="term" value="P:D-ribose metabolic process"/>
    <property type="evidence" value="ECO:0007669"/>
    <property type="project" value="TreeGrafter"/>
</dbReference>
<dbReference type="GO" id="GO:0009052">
    <property type="term" value="P:pentose-phosphate shunt, non-oxidative branch"/>
    <property type="evidence" value="ECO:0007669"/>
    <property type="project" value="UniProtKB-UniRule"/>
</dbReference>
<dbReference type="CDD" id="cd01398">
    <property type="entry name" value="RPI_A"/>
    <property type="match status" value="1"/>
</dbReference>
<dbReference type="FunFam" id="3.40.50.1360:FF:000001">
    <property type="entry name" value="Ribose-5-phosphate isomerase A"/>
    <property type="match status" value="1"/>
</dbReference>
<dbReference type="Gene3D" id="3.30.70.260">
    <property type="match status" value="1"/>
</dbReference>
<dbReference type="Gene3D" id="3.40.50.1360">
    <property type="match status" value="1"/>
</dbReference>
<dbReference type="HAMAP" id="MF_00170">
    <property type="entry name" value="Rib_5P_isom_A"/>
    <property type="match status" value="1"/>
</dbReference>
<dbReference type="InterPro" id="IPR037171">
    <property type="entry name" value="NagB/RpiA_transferase-like"/>
</dbReference>
<dbReference type="InterPro" id="IPR020672">
    <property type="entry name" value="Ribose5P_isomerase_typA_subgr"/>
</dbReference>
<dbReference type="InterPro" id="IPR004788">
    <property type="entry name" value="Ribose5P_isomerase_type_A"/>
</dbReference>
<dbReference type="NCBIfam" id="NF001924">
    <property type="entry name" value="PRK00702.1"/>
    <property type="match status" value="1"/>
</dbReference>
<dbReference type="NCBIfam" id="TIGR00021">
    <property type="entry name" value="rpiA"/>
    <property type="match status" value="1"/>
</dbReference>
<dbReference type="PANTHER" id="PTHR11934">
    <property type="entry name" value="RIBOSE-5-PHOSPHATE ISOMERASE"/>
    <property type="match status" value="1"/>
</dbReference>
<dbReference type="PANTHER" id="PTHR11934:SF0">
    <property type="entry name" value="RIBOSE-5-PHOSPHATE ISOMERASE"/>
    <property type="match status" value="1"/>
</dbReference>
<dbReference type="Pfam" id="PF06026">
    <property type="entry name" value="Rib_5-P_isom_A"/>
    <property type="match status" value="1"/>
</dbReference>
<dbReference type="SUPFAM" id="SSF75445">
    <property type="entry name" value="D-ribose-5-phosphate isomerase (RpiA), lid domain"/>
    <property type="match status" value="1"/>
</dbReference>
<dbReference type="SUPFAM" id="SSF100950">
    <property type="entry name" value="NagB/RpiA/CoA transferase-like"/>
    <property type="match status" value="1"/>
</dbReference>
<feature type="chain" id="PRO_1000077072" description="Ribose-5-phosphate isomerase A">
    <location>
        <begin position="1"/>
        <end position="236"/>
    </location>
</feature>
<feature type="active site" description="Proton acceptor" evidence="1">
    <location>
        <position position="106"/>
    </location>
</feature>
<feature type="binding site" evidence="1">
    <location>
        <begin position="31"/>
        <end position="34"/>
    </location>
    <ligand>
        <name>substrate</name>
    </ligand>
</feature>
<feature type="binding site" evidence="1">
    <location>
        <begin position="84"/>
        <end position="87"/>
    </location>
    <ligand>
        <name>substrate</name>
    </ligand>
</feature>
<feature type="binding site" evidence="1">
    <location>
        <begin position="97"/>
        <end position="100"/>
    </location>
    <ligand>
        <name>substrate</name>
    </ligand>
</feature>
<feature type="binding site" evidence="1">
    <location>
        <position position="124"/>
    </location>
    <ligand>
        <name>substrate</name>
    </ligand>
</feature>
<organism>
    <name type="scientific">Polynucleobacter asymbioticus (strain DSM 18221 / CIP 109841 / QLW-P1DMWA-1)</name>
    <name type="common">Polynucleobacter necessarius subsp. asymbioticus</name>
    <dbReference type="NCBI Taxonomy" id="312153"/>
    <lineage>
        <taxon>Bacteria</taxon>
        <taxon>Pseudomonadati</taxon>
        <taxon>Pseudomonadota</taxon>
        <taxon>Betaproteobacteria</taxon>
        <taxon>Burkholderiales</taxon>
        <taxon>Burkholderiaceae</taxon>
        <taxon>Polynucleobacter</taxon>
    </lineage>
</organism>
<evidence type="ECO:0000255" key="1">
    <source>
        <dbReference type="HAMAP-Rule" id="MF_00170"/>
    </source>
</evidence>
<name>RPIA_POLAQ</name>
<proteinExistence type="inferred from homology"/>